<keyword id="KW-0002">3D-structure</keyword>
<keyword id="KW-0007">Acetylation</keyword>
<keyword id="KW-0025">Alternative splicing</keyword>
<keyword id="KW-0276">Fatty acid metabolism</keyword>
<keyword id="KW-0443">Lipid metabolism</keyword>
<keyword id="KW-0496">Mitochondrion</keyword>
<keyword id="KW-0521">NADP</keyword>
<keyword id="KW-0560">Oxidoreductase</keyword>
<keyword id="KW-0597">Phosphoprotein</keyword>
<keyword id="KW-1267">Proteomics identification</keyword>
<keyword id="KW-1185">Reference proteome</keyword>
<keyword id="KW-0809">Transit peptide</keyword>
<accession>Q16698</accession>
<accession>B7Z6B8</accession>
<accession>Q2M304</accession>
<accession>Q93085</accession>
<gene>
    <name type="primary">DECR1</name>
    <name type="synonym">DECR</name>
    <name type="synonym">SDR18C1</name>
</gene>
<sequence>MKLPARVFFTLGSRLPCGLAPRRFFSYGTKILYQNTEALQSKFFSPLQKAMLPPNSFQGKVAFITGGGTGLGKGMTTLLSSLGAQCVIASRKMDVLKATAEQISSQTGNKVHAIQCDVRDPDMVQNTVSELIKVAGHPNIVINNAAGNFISPTERLSPNAWKTITDIVLNGTAFVTLEIGKQLIKAQKGAAFLSITTIYAETGSGFVVPSASAKAGVEAMSKSLAAEWGKYGMRFNVIQPGPIKTKGAFSRLDPTGTFEKEMIGRIPCGRLGTVEELANLAAFLCSDYASWINGAVIKFDGGEEVLISGEFNDLRKVTKEQWDTIEELIRKTKGS</sequence>
<evidence type="ECO:0000250" key="1"/>
<evidence type="ECO:0000250" key="2">
    <source>
        <dbReference type="UniProtKB" id="Q9CQ62"/>
    </source>
</evidence>
<evidence type="ECO:0000255" key="3"/>
<evidence type="ECO:0000269" key="4">
    <source>
    </source>
</evidence>
<evidence type="ECO:0000269" key="5">
    <source>
    </source>
</evidence>
<evidence type="ECO:0000269" key="6">
    <source>
    </source>
</evidence>
<evidence type="ECO:0000303" key="7">
    <source>
    </source>
</evidence>
<evidence type="ECO:0000305" key="8"/>
<evidence type="ECO:0000305" key="9">
    <source>
    </source>
</evidence>
<evidence type="ECO:0007744" key="10">
    <source>
    </source>
</evidence>
<evidence type="ECO:0007744" key="11">
    <source>
    </source>
</evidence>
<evidence type="ECO:0007829" key="12">
    <source>
        <dbReference type="PDB" id="1W6U"/>
    </source>
</evidence>
<evidence type="ECO:0007829" key="13">
    <source>
        <dbReference type="PDB" id="1W73"/>
    </source>
</evidence>
<organism>
    <name type="scientific">Homo sapiens</name>
    <name type="common">Human</name>
    <dbReference type="NCBI Taxonomy" id="9606"/>
    <lineage>
        <taxon>Eukaryota</taxon>
        <taxon>Metazoa</taxon>
        <taxon>Chordata</taxon>
        <taxon>Craniata</taxon>
        <taxon>Vertebrata</taxon>
        <taxon>Euteleostomi</taxon>
        <taxon>Mammalia</taxon>
        <taxon>Eutheria</taxon>
        <taxon>Euarchontoglires</taxon>
        <taxon>Primates</taxon>
        <taxon>Haplorrhini</taxon>
        <taxon>Catarrhini</taxon>
        <taxon>Hominidae</taxon>
        <taxon>Homo</taxon>
    </lineage>
</organism>
<dbReference type="EC" id="1.3.1.124" evidence="4"/>
<dbReference type="EMBL" id="L26050">
    <property type="protein sequence ID" value="AAA67551.1"/>
    <property type="molecule type" value="mRNA"/>
</dbReference>
<dbReference type="EMBL" id="U49352">
    <property type="protein sequence ID" value="AAB09423.1"/>
    <property type="molecule type" value="mRNA"/>
</dbReference>
<dbReference type="EMBL" id="U78302">
    <property type="protein sequence ID" value="AAB88724.1"/>
    <property type="molecule type" value="Genomic_DNA"/>
</dbReference>
<dbReference type="EMBL" id="U94980">
    <property type="protein sequence ID" value="AAB88724.1"/>
    <property type="status" value="JOINED"/>
    <property type="molecule type" value="Genomic_DNA"/>
</dbReference>
<dbReference type="EMBL" id="U94981">
    <property type="protein sequence ID" value="AAB88724.1"/>
    <property type="status" value="JOINED"/>
    <property type="molecule type" value="Genomic_DNA"/>
</dbReference>
<dbReference type="EMBL" id="U94982">
    <property type="protein sequence ID" value="AAB88724.1"/>
    <property type="status" value="JOINED"/>
    <property type="molecule type" value="Genomic_DNA"/>
</dbReference>
<dbReference type="EMBL" id="U94983">
    <property type="protein sequence ID" value="AAB88724.1"/>
    <property type="status" value="JOINED"/>
    <property type="molecule type" value="Genomic_DNA"/>
</dbReference>
<dbReference type="EMBL" id="U94984">
    <property type="protein sequence ID" value="AAB88724.1"/>
    <property type="status" value="JOINED"/>
    <property type="molecule type" value="Genomic_DNA"/>
</dbReference>
<dbReference type="EMBL" id="U94985">
    <property type="protein sequence ID" value="AAB88724.1"/>
    <property type="status" value="JOINED"/>
    <property type="molecule type" value="Genomic_DNA"/>
</dbReference>
<dbReference type="EMBL" id="U94986">
    <property type="protein sequence ID" value="AAB88724.1"/>
    <property type="status" value="JOINED"/>
    <property type="molecule type" value="Genomic_DNA"/>
</dbReference>
<dbReference type="EMBL" id="U94987">
    <property type="protein sequence ID" value="AAB88724.1"/>
    <property type="status" value="JOINED"/>
    <property type="molecule type" value="Genomic_DNA"/>
</dbReference>
<dbReference type="EMBL" id="AK300069">
    <property type="protein sequence ID" value="BAH13204.1"/>
    <property type="molecule type" value="mRNA"/>
</dbReference>
<dbReference type="EMBL" id="AC004612">
    <property type="protein sequence ID" value="AAC14671.1"/>
    <property type="molecule type" value="Genomic_DNA"/>
</dbReference>
<dbReference type="EMBL" id="AF049895">
    <property type="status" value="NOT_ANNOTATED_CDS"/>
    <property type="molecule type" value="Genomic_DNA"/>
</dbReference>
<dbReference type="EMBL" id="BC105080">
    <property type="protein sequence ID" value="AAI05081.1"/>
    <property type="molecule type" value="mRNA"/>
</dbReference>
<dbReference type="EMBL" id="BC105082">
    <property type="protein sequence ID" value="AAI05083.1"/>
    <property type="molecule type" value="mRNA"/>
</dbReference>
<dbReference type="CCDS" id="CCDS6250.1">
    <molecule id="Q16698-1"/>
</dbReference>
<dbReference type="CCDS" id="CCDS87618.1">
    <molecule id="Q16698-2"/>
</dbReference>
<dbReference type="PIR" id="S53352">
    <property type="entry name" value="S53352"/>
</dbReference>
<dbReference type="RefSeq" id="NP_001317504.1">
    <molecule id="Q16698-2"/>
    <property type="nucleotide sequence ID" value="NM_001330575.2"/>
</dbReference>
<dbReference type="RefSeq" id="NP_001350.1">
    <molecule id="Q16698-1"/>
    <property type="nucleotide sequence ID" value="NM_001359.2"/>
</dbReference>
<dbReference type="RefSeq" id="XP_016868636.1">
    <property type="nucleotide sequence ID" value="XM_017013147.1"/>
</dbReference>
<dbReference type="RefSeq" id="XP_016868637.1">
    <property type="nucleotide sequence ID" value="XM_017013148.1"/>
</dbReference>
<dbReference type="RefSeq" id="XP_047277365.1">
    <molecule id="Q16698-2"/>
    <property type="nucleotide sequence ID" value="XM_047421409.1"/>
</dbReference>
<dbReference type="RefSeq" id="XP_054215840.1">
    <molecule id="Q16698-2"/>
    <property type="nucleotide sequence ID" value="XM_054359865.1"/>
</dbReference>
<dbReference type="PDB" id="1W6U">
    <property type="method" value="X-ray"/>
    <property type="resolution" value="1.75 A"/>
    <property type="chains" value="A/B/C/D=35-335"/>
</dbReference>
<dbReference type="PDB" id="1W73">
    <property type="method" value="X-ray"/>
    <property type="resolution" value="2.10 A"/>
    <property type="chains" value="A/B/C/D=35-335"/>
</dbReference>
<dbReference type="PDB" id="1W8D">
    <property type="method" value="X-ray"/>
    <property type="resolution" value="2.20 A"/>
    <property type="chains" value="A/B/C/D=35-335"/>
</dbReference>
<dbReference type="PDBsum" id="1W6U"/>
<dbReference type="PDBsum" id="1W73"/>
<dbReference type="PDBsum" id="1W8D"/>
<dbReference type="SMR" id="Q16698"/>
<dbReference type="BioGRID" id="108030">
    <property type="interactions" value="90"/>
</dbReference>
<dbReference type="FunCoup" id="Q16698">
    <property type="interactions" value="1016"/>
</dbReference>
<dbReference type="IntAct" id="Q16698">
    <property type="interactions" value="62"/>
</dbReference>
<dbReference type="MINT" id="Q16698"/>
<dbReference type="STRING" id="9606.ENSP00000220764"/>
<dbReference type="DrugBank" id="DB08605">
    <property type="generic name" value="6-METHYL-2(PROPANE-1-SULFONYL)-2H-THIENO[3,2-D][1,2,3]DIAZABORININ-1-OL"/>
</dbReference>
<dbReference type="DrugBank" id="DB03461">
    <property type="generic name" value="Nicotinamide adenine dinucleotide phosphate"/>
</dbReference>
<dbReference type="SwissLipids" id="SLP:000001049"/>
<dbReference type="CarbonylDB" id="Q16698"/>
<dbReference type="GlyGen" id="Q16698">
    <property type="glycosylation" value="1 site, 1 O-linked glycan (1 site)"/>
</dbReference>
<dbReference type="iPTMnet" id="Q16698"/>
<dbReference type="MetOSite" id="Q16698"/>
<dbReference type="PhosphoSitePlus" id="Q16698"/>
<dbReference type="SwissPalm" id="Q16698"/>
<dbReference type="BioMuta" id="DECR1"/>
<dbReference type="DMDM" id="3913456"/>
<dbReference type="jPOST" id="Q16698"/>
<dbReference type="MassIVE" id="Q16698"/>
<dbReference type="PaxDb" id="9606-ENSP00000220764"/>
<dbReference type="PeptideAtlas" id="Q16698"/>
<dbReference type="ProteomicsDB" id="61037">
    <molecule id="Q16698-1"/>
</dbReference>
<dbReference type="ProteomicsDB" id="6768"/>
<dbReference type="Pumba" id="Q16698"/>
<dbReference type="TopDownProteomics" id="Q16698-1">
    <molecule id="Q16698-1"/>
</dbReference>
<dbReference type="TopDownProteomics" id="Q16698-2">
    <molecule id="Q16698-2"/>
</dbReference>
<dbReference type="Antibodypedia" id="12737">
    <property type="antibodies" value="276 antibodies from 28 providers"/>
</dbReference>
<dbReference type="DNASU" id="1666"/>
<dbReference type="Ensembl" id="ENST00000220764.7">
    <molecule id="Q16698-1"/>
    <property type="protein sequence ID" value="ENSP00000220764.2"/>
    <property type="gene ID" value="ENSG00000104325.7"/>
</dbReference>
<dbReference type="Ensembl" id="ENST00000522161.5">
    <molecule id="Q16698-2"/>
    <property type="protein sequence ID" value="ENSP00000429779.1"/>
    <property type="gene ID" value="ENSG00000104325.7"/>
</dbReference>
<dbReference type="GeneID" id="1666"/>
<dbReference type="KEGG" id="hsa:1666"/>
<dbReference type="MANE-Select" id="ENST00000220764.7">
    <property type="protein sequence ID" value="ENSP00000220764.2"/>
    <property type="RefSeq nucleotide sequence ID" value="NM_001359.2"/>
    <property type="RefSeq protein sequence ID" value="NP_001350.1"/>
</dbReference>
<dbReference type="UCSC" id="uc003yek.2">
    <molecule id="Q16698-1"/>
    <property type="organism name" value="human"/>
</dbReference>
<dbReference type="AGR" id="HGNC:2753"/>
<dbReference type="CTD" id="1666"/>
<dbReference type="DisGeNET" id="1666"/>
<dbReference type="GeneCards" id="DECR1"/>
<dbReference type="HGNC" id="HGNC:2753">
    <property type="gene designation" value="DECR1"/>
</dbReference>
<dbReference type="HPA" id="ENSG00000104325">
    <property type="expression patterns" value="Tissue enhanced (heart muscle, liver)"/>
</dbReference>
<dbReference type="MalaCards" id="DECR1"/>
<dbReference type="MIM" id="222745">
    <property type="type" value="gene"/>
</dbReference>
<dbReference type="MIM" id="616034">
    <property type="type" value="phenotype"/>
</dbReference>
<dbReference type="neXtProt" id="NX_Q16698"/>
<dbReference type="OpenTargets" id="ENSG00000104325"/>
<dbReference type="PharmGKB" id="PA141"/>
<dbReference type="VEuPathDB" id="HostDB:ENSG00000104325"/>
<dbReference type="eggNOG" id="KOG0725">
    <property type="taxonomic scope" value="Eukaryota"/>
</dbReference>
<dbReference type="GeneTree" id="ENSGT00940000153801"/>
<dbReference type="HOGENOM" id="CLU_010194_1_2_1"/>
<dbReference type="InParanoid" id="Q16698"/>
<dbReference type="OMA" id="GKAMTKY"/>
<dbReference type="OrthoDB" id="1888931at2759"/>
<dbReference type="PAN-GO" id="Q16698">
    <property type="GO annotations" value="3 GO annotations based on evolutionary models"/>
</dbReference>
<dbReference type="PhylomeDB" id="Q16698"/>
<dbReference type="TreeFam" id="TF315256"/>
<dbReference type="BRENDA" id="1.3.1.124">
    <property type="organism ID" value="2681"/>
</dbReference>
<dbReference type="PathwayCommons" id="Q16698"/>
<dbReference type="Reactome" id="R-HSA-77288">
    <property type="pathway name" value="mitochondrial fatty acid beta-oxidation of unsaturated fatty acids"/>
</dbReference>
<dbReference type="SABIO-RK" id="Q16698"/>
<dbReference type="SignaLink" id="Q16698"/>
<dbReference type="BioGRID-ORCS" id="1666">
    <property type="hits" value="11 hits in 1159 CRISPR screens"/>
</dbReference>
<dbReference type="CD-CODE" id="FB4E32DD">
    <property type="entry name" value="Presynaptic clusters and postsynaptic densities"/>
</dbReference>
<dbReference type="ChiTaRS" id="DECR1">
    <property type="organism name" value="human"/>
</dbReference>
<dbReference type="EvolutionaryTrace" id="Q16698"/>
<dbReference type="GenomeRNAi" id="1666"/>
<dbReference type="Pharos" id="Q16698">
    <property type="development level" value="Tbio"/>
</dbReference>
<dbReference type="PRO" id="PR:Q16698"/>
<dbReference type="Proteomes" id="UP000005640">
    <property type="component" value="Chromosome 8"/>
</dbReference>
<dbReference type="RNAct" id="Q16698">
    <property type="molecule type" value="protein"/>
</dbReference>
<dbReference type="Bgee" id="ENSG00000104325">
    <property type="expression patterns" value="Expressed in left ventricle myocardium and 200 other cell types or tissues"/>
</dbReference>
<dbReference type="ExpressionAtlas" id="Q16698">
    <property type="expression patterns" value="baseline and differential"/>
</dbReference>
<dbReference type="GO" id="GO:1902494">
    <property type="term" value="C:catalytic complex"/>
    <property type="evidence" value="ECO:0000314"/>
    <property type="project" value="UniProtKB"/>
</dbReference>
<dbReference type="GO" id="GO:0005829">
    <property type="term" value="C:cytosol"/>
    <property type="evidence" value="ECO:0000314"/>
    <property type="project" value="HPA"/>
</dbReference>
<dbReference type="GO" id="GO:0005759">
    <property type="term" value="C:mitochondrial matrix"/>
    <property type="evidence" value="ECO:0000304"/>
    <property type="project" value="Reactome"/>
</dbReference>
<dbReference type="GO" id="GO:0005739">
    <property type="term" value="C:mitochondrion"/>
    <property type="evidence" value="ECO:0000314"/>
    <property type="project" value="HPA"/>
</dbReference>
<dbReference type="GO" id="GO:0005654">
    <property type="term" value="C:nucleoplasm"/>
    <property type="evidence" value="ECO:0000314"/>
    <property type="project" value="HPA"/>
</dbReference>
<dbReference type="GO" id="GO:0005634">
    <property type="term" value="C:nucleus"/>
    <property type="evidence" value="ECO:0007005"/>
    <property type="project" value="UniProtKB"/>
</dbReference>
<dbReference type="GO" id="GO:0008670">
    <property type="term" value="F:2,4-dienoyl-CoA reductase (NADPH) activity"/>
    <property type="evidence" value="ECO:0000314"/>
    <property type="project" value="UniProtKB"/>
</dbReference>
<dbReference type="GO" id="GO:0042802">
    <property type="term" value="F:identical protein binding"/>
    <property type="evidence" value="ECO:0000353"/>
    <property type="project" value="UniProtKB"/>
</dbReference>
<dbReference type="GO" id="GO:0070402">
    <property type="term" value="F:NADPH binding"/>
    <property type="evidence" value="ECO:0000314"/>
    <property type="project" value="UniProtKB"/>
</dbReference>
<dbReference type="GO" id="GO:0006635">
    <property type="term" value="P:fatty acid beta-oxidation"/>
    <property type="evidence" value="ECO:0000314"/>
    <property type="project" value="UniProtKB"/>
</dbReference>
<dbReference type="GO" id="GO:0120162">
    <property type="term" value="P:positive regulation of cold-induced thermogenesis"/>
    <property type="evidence" value="ECO:0000250"/>
    <property type="project" value="YuBioLab"/>
</dbReference>
<dbReference type="CDD" id="cd05369">
    <property type="entry name" value="TER_DECR_SDR_a"/>
    <property type="match status" value="1"/>
</dbReference>
<dbReference type="FunFam" id="3.40.50.720:FF:000288">
    <property type="entry name" value="2,4-dienoyl-CoA reductase, mitochondrial"/>
    <property type="match status" value="1"/>
</dbReference>
<dbReference type="Gene3D" id="3.40.50.720">
    <property type="entry name" value="NAD(P)-binding Rossmann-like Domain"/>
    <property type="match status" value="1"/>
</dbReference>
<dbReference type="InterPro" id="IPR036291">
    <property type="entry name" value="NAD(P)-bd_dom_sf"/>
</dbReference>
<dbReference type="InterPro" id="IPR002347">
    <property type="entry name" value="SDR_fam"/>
</dbReference>
<dbReference type="PANTHER" id="PTHR43658:SF14">
    <property type="entry name" value="2,4-DIENOYL-COA REDUCTASE [(3E)-ENOYL-COA-PRODUCING], MITOCHONDRIAL"/>
    <property type="match status" value="1"/>
</dbReference>
<dbReference type="PANTHER" id="PTHR43658">
    <property type="entry name" value="SHORT-CHAIN DEHYDROGENASE/REDUCTASE"/>
    <property type="match status" value="1"/>
</dbReference>
<dbReference type="Pfam" id="PF13561">
    <property type="entry name" value="adh_short_C2"/>
    <property type="match status" value="1"/>
</dbReference>
<dbReference type="PRINTS" id="PR00081">
    <property type="entry name" value="GDHRDH"/>
</dbReference>
<dbReference type="SUPFAM" id="SSF51735">
    <property type="entry name" value="NAD(P)-binding Rossmann-fold domains"/>
    <property type="match status" value="1"/>
</dbReference>
<proteinExistence type="evidence at protein level"/>
<protein>
    <recommendedName>
        <fullName>2,4-dienoyl-CoA reductase [(3E)-enoyl-CoA-producing], mitochondrial</fullName>
        <ecNumber evidence="4">1.3.1.124</ecNumber>
    </recommendedName>
    <alternativeName>
        <fullName>2,4-dienoyl-CoA reductase [NADPH]</fullName>
        <shortName>4-enoyl-CoA reductase [NADPH]</shortName>
    </alternativeName>
    <alternativeName>
        <fullName>Short chain dehydrogenase/reductase family 18C member 1</fullName>
    </alternativeName>
</protein>
<reference key="1">
    <citation type="journal article" date="1994" name="Biochem. J.">
        <title>Isolation and characterization of cDNA for human 120 kDa mitochondrial 2,4-dienoyl-coenzyme A reductase.</title>
        <authorList>
            <person name="Koivuranta K.T."/>
            <person name="Hakkola E.H."/>
            <person name="Hiltunen J.K."/>
        </authorList>
    </citation>
    <scope>NUCLEOTIDE SEQUENCE [MRNA] (ISOFORM 1)</scope>
    <scope>TISSUE SPECIFICITY</scope>
    <scope>SUBCELLULAR LOCATION</scope>
    <source>
        <tissue>Liver</tissue>
    </source>
</reference>
<reference key="2">
    <citation type="submission" date="1996-10" db="EMBL/GenBank/DDBJ databases">
        <authorList>
            <person name="Ding J.H."/>
            <person name="Yang B.Z."/>
            <person name="Roe C.R."/>
        </authorList>
    </citation>
    <scope>NUCLEOTIDE SEQUENCE [MRNA] (ISOFORM 1)</scope>
    <source>
        <tissue>Liver</tissue>
    </source>
</reference>
<reference key="3">
    <citation type="journal article" date="1997" name="Genomics">
        <title>Molecular cloning and characterization of the human mitochondrial 2,4-dienoyl-CoA reductase gene (DECR).</title>
        <authorList>
            <person name="Helander H.M."/>
            <person name="Koivuranta K.T."/>
            <person name="Horelli-Kuitunen N."/>
            <person name="Palvimo J.J."/>
            <person name="Palotie A."/>
            <person name="Hiltunen J.K."/>
        </authorList>
    </citation>
    <scope>NUCLEOTIDE SEQUENCE [GENOMIC DNA]</scope>
</reference>
<reference key="4">
    <citation type="journal article" date="2004" name="Nat. Genet.">
        <title>Complete sequencing and characterization of 21,243 full-length human cDNAs.</title>
        <authorList>
            <person name="Ota T."/>
            <person name="Suzuki Y."/>
            <person name="Nishikawa T."/>
            <person name="Otsuki T."/>
            <person name="Sugiyama T."/>
            <person name="Irie R."/>
            <person name="Wakamatsu A."/>
            <person name="Hayashi K."/>
            <person name="Sato H."/>
            <person name="Nagai K."/>
            <person name="Kimura K."/>
            <person name="Makita H."/>
            <person name="Sekine M."/>
            <person name="Obayashi M."/>
            <person name="Nishi T."/>
            <person name="Shibahara T."/>
            <person name="Tanaka T."/>
            <person name="Ishii S."/>
            <person name="Yamamoto J."/>
            <person name="Saito K."/>
            <person name="Kawai Y."/>
            <person name="Isono Y."/>
            <person name="Nakamura Y."/>
            <person name="Nagahari K."/>
            <person name="Murakami K."/>
            <person name="Yasuda T."/>
            <person name="Iwayanagi T."/>
            <person name="Wagatsuma M."/>
            <person name="Shiratori A."/>
            <person name="Sudo H."/>
            <person name="Hosoiri T."/>
            <person name="Kaku Y."/>
            <person name="Kodaira H."/>
            <person name="Kondo H."/>
            <person name="Sugawara M."/>
            <person name="Takahashi M."/>
            <person name="Kanda K."/>
            <person name="Yokoi T."/>
            <person name="Furuya T."/>
            <person name="Kikkawa E."/>
            <person name="Omura Y."/>
            <person name="Abe K."/>
            <person name="Kamihara K."/>
            <person name="Katsuta N."/>
            <person name="Sato K."/>
            <person name="Tanikawa M."/>
            <person name="Yamazaki M."/>
            <person name="Ninomiya K."/>
            <person name="Ishibashi T."/>
            <person name="Yamashita H."/>
            <person name="Murakawa K."/>
            <person name="Fujimori K."/>
            <person name="Tanai H."/>
            <person name="Kimata M."/>
            <person name="Watanabe M."/>
            <person name="Hiraoka S."/>
            <person name="Chiba Y."/>
            <person name="Ishida S."/>
            <person name="Ono Y."/>
            <person name="Takiguchi S."/>
            <person name="Watanabe S."/>
            <person name="Yosida M."/>
            <person name="Hotuta T."/>
            <person name="Kusano J."/>
            <person name="Kanehori K."/>
            <person name="Takahashi-Fujii A."/>
            <person name="Hara H."/>
            <person name="Tanase T.-O."/>
            <person name="Nomura Y."/>
            <person name="Togiya S."/>
            <person name="Komai F."/>
            <person name="Hara R."/>
            <person name="Takeuchi K."/>
            <person name="Arita M."/>
            <person name="Imose N."/>
            <person name="Musashino K."/>
            <person name="Yuuki H."/>
            <person name="Oshima A."/>
            <person name="Sasaki N."/>
            <person name="Aotsuka S."/>
            <person name="Yoshikawa Y."/>
            <person name="Matsunawa H."/>
            <person name="Ichihara T."/>
            <person name="Shiohata N."/>
            <person name="Sano S."/>
            <person name="Moriya S."/>
            <person name="Momiyama H."/>
            <person name="Satoh N."/>
            <person name="Takami S."/>
            <person name="Terashima Y."/>
            <person name="Suzuki O."/>
            <person name="Nakagawa S."/>
            <person name="Senoh A."/>
            <person name="Mizoguchi H."/>
            <person name="Goto Y."/>
            <person name="Shimizu F."/>
            <person name="Wakebe H."/>
            <person name="Hishigaki H."/>
            <person name="Watanabe T."/>
            <person name="Sugiyama A."/>
            <person name="Takemoto M."/>
            <person name="Kawakami B."/>
            <person name="Yamazaki M."/>
            <person name="Watanabe K."/>
            <person name="Kumagai A."/>
            <person name="Itakura S."/>
            <person name="Fukuzumi Y."/>
            <person name="Fujimori Y."/>
            <person name="Komiyama M."/>
            <person name="Tashiro H."/>
            <person name="Tanigami A."/>
            <person name="Fujiwara T."/>
            <person name="Ono T."/>
            <person name="Yamada K."/>
            <person name="Fujii Y."/>
            <person name="Ozaki K."/>
            <person name="Hirao M."/>
            <person name="Ohmori Y."/>
            <person name="Kawabata A."/>
            <person name="Hikiji T."/>
            <person name="Kobatake N."/>
            <person name="Inagaki H."/>
            <person name="Ikema Y."/>
            <person name="Okamoto S."/>
            <person name="Okitani R."/>
            <person name="Kawakami T."/>
            <person name="Noguchi S."/>
            <person name="Itoh T."/>
            <person name="Shigeta K."/>
            <person name="Senba T."/>
            <person name="Matsumura K."/>
            <person name="Nakajima Y."/>
            <person name="Mizuno T."/>
            <person name="Morinaga M."/>
            <person name="Sasaki M."/>
            <person name="Togashi T."/>
            <person name="Oyama M."/>
            <person name="Hata H."/>
            <person name="Watanabe M."/>
            <person name="Komatsu T."/>
            <person name="Mizushima-Sugano J."/>
            <person name="Satoh T."/>
            <person name="Shirai Y."/>
            <person name="Takahashi Y."/>
            <person name="Nakagawa K."/>
            <person name="Okumura K."/>
            <person name="Nagase T."/>
            <person name="Nomura N."/>
            <person name="Kikuchi H."/>
            <person name="Masuho Y."/>
            <person name="Yamashita R."/>
            <person name="Nakai K."/>
            <person name="Yada T."/>
            <person name="Nakamura Y."/>
            <person name="Ohara O."/>
            <person name="Isogai T."/>
            <person name="Sugano S."/>
        </authorList>
    </citation>
    <scope>NUCLEOTIDE SEQUENCE [LARGE SCALE MRNA] (ISOFORM 2)</scope>
    <source>
        <tissue>Pericardium</tissue>
    </source>
</reference>
<reference key="5">
    <citation type="journal article" date="2006" name="Nature">
        <title>DNA sequence and analysis of human chromosome 8.</title>
        <authorList>
            <person name="Nusbaum C."/>
            <person name="Mikkelsen T.S."/>
            <person name="Zody M.C."/>
            <person name="Asakawa S."/>
            <person name="Taudien S."/>
            <person name="Garber M."/>
            <person name="Kodira C.D."/>
            <person name="Schueler M.G."/>
            <person name="Shimizu A."/>
            <person name="Whittaker C.A."/>
            <person name="Chang J.L."/>
            <person name="Cuomo C.A."/>
            <person name="Dewar K."/>
            <person name="FitzGerald M.G."/>
            <person name="Yang X."/>
            <person name="Allen N.R."/>
            <person name="Anderson S."/>
            <person name="Asakawa T."/>
            <person name="Blechschmidt K."/>
            <person name="Bloom T."/>
            <person name="Borowsky M.L."/>
            <person name="Butler J."/>
            <person name="Cook A."/>
            <person name="Corum B."/>
            <person name="DeArellano K."/>
            <person name="DeCaprio D."/>
            <person name="Dooley K.T."/>
            <person name="Dorris L. III"/>
            <person name="Engels R."/>
            <person name="Gloeckner G."/>
            <person name="Hafez N."/>
            <person name="Hagopian D.S."/>
            <person name="Hall J.L."/>
            <person name="Ishikawa S.K."/>
            <person name="Jaffe D.B."/>
            <person name="Kamat A."/>
            <person name="Kudoh J."/>
            <person name="Lehmann R."/>
            <person name="Lokitsang T."/>
            <person name="Macdonald P."/>
            <person name="Major J.E."/>
            <person name="Matthews C.D."/>
            <person name="Mauceli E."/>
            <person name="Menzel U."/>
            <person name="Mihalev A.H."/>
            <person name="Minoshima S."/>
            <person name="Murayama Y."/>
            <person name="Naylor J.W."/>
            <person name="Nicol R."/>
            <person name="Nguyen C."/>
            <person name="O'Leary S.B."/>
            <person name="O'Neill K."/>
            <person name="Parker S.C.J."/>
            <person name="Polley A."/>
            <person name="Raymond C.K."/>
            <person name="Reichwald K."/>
            <person name="Rodriguez J."/>
            <person name="Sasaki T."/>
            <person name="Schilhabel M."/>
            <person name="Siddiqui R."/>
            <person name="Smith C.L."/>
            <person name="Sneddon T.P."/>
            <person name="Talamas J.A."/>
            <person name="Tenzin P."/>
            <person name="Topham K."/>
            <person name="Venkataraman V."/>
            <person name="Wen G."/>
            <person name="Yamazaki S."/>
            <person name="Young S.K."/>
            <person name="Zeng Q."/>
            <person name="Zimmer A.R."/>
            <person name="Rosenthal A."/>
            <person name="Birren B.W."/>
            <person name="Platzer M."/>
            <person name="Shimizu N."/>
            <person name="Lander E.S."/>
        </authorList>
    </citation>
    <scope>NUCLEOTIDE SEQUENCE [LARGE SCALE GENOMIC DNA]</scope>
</reference>
<reference key="6">
    <citation type="journal article" date="2004" name="Genome Res.">
        <title>The status, quality, and expansion of the NIH full-length cDNA project: the Mammalian Gene Collection (MGC).</title>
        <authorList>
            <consortium name="The MGC Project Team"/>
        </authorList>
    </citation>
    <scope>NUCLEOTIDE SEQUENCE [LARGE SCALE MRNA] (ISOFORM 1)</scope>
    <source>
        <tissue>Brain</tissue>
    </source>
</reference>
<reference key="7">
    <citation type="journal article" date="2003" name="Nature">
        <title>Proteomic characterization of the human centrosome by protein correlation profiling.</title>
        <authorList>
            <person name="Andersen J.S."/>
            <person name="Wilkinson C.J."/>
            <person name="Mayor T."/>
            <person name="Mortensen P."/>
            <person name="Nigg E.A."/>
            <person name="Mann M."/>
        </authorList>
    </citation>
    <scope>IDENTIFICATION BY MASS SPECTROMETRY</scope>
    <source>
        <tissue>Lymphoblast</tissue>
    </source>
</reference>
<reference key="8">
    <citation type="journal article" date="2009" name="Science">
        <title>Lysine acetylation targets protein complexes and co-regulates major cellular functions.</title>
        <authorList>
            <person name="Choudhary C."/>
            <person name="Kumar C."/>
            <person name="Gnad F."/>
            <person name="Nielsen M.L."/>
            <person name="Rehman M."/>
            <person name="Walther T.C."/>
            <person name="Olsen J.V."/>
            <person name="Mann M."/>
        </authorList>
    </citation>
    <scope>ACETYLATION [LARGE SCALE ANALYSIS] AT LYS-230</scope>
    <scope>IDENTIFICATION BY MASS SPECTROMETRY [LARGE SCALE ANALYSIS]</scope>
</reference>
<reference key="9">
    <citation type="journal article" date="2011" name="BMC Syst. Biol.">
        <title>Initial characterization of the human central proteome.</title>
        <authorList>
            <person name="Burkard T.R."/>
            <person name="Planyavsky M."/>
            <person name="Kaupe I."/>
            <person name="Breitwieser F.P."/>
            <person name="Buerckstuemmer T."/>
            <person name="Bennett K.L."/>
            <person name="Superti-Furga G."/>
            <person name="Colinge J."/>
        </authorList>
    </citation>
    <scope>IDENTIFICATION BY MASS SPECTROMETRY [LARGE SCALE ANALYSIS]</scope>
</reference>
<reference key="10">
    <citation type="journal article" date="2014" name="Hum. Mol. Genet.">
        <title>Mitochondrial NADP(H) deficiency due to a mutation in NADK2 causes dienoyl-CoA reductase deficiency with hyperlysinemia.</title>
        <authorList>
            <person name="Houten S.M."/>
            <person name="Denis S."/>
            <person name="Te Brinke H."/>
            <person name="Jongejan A."/>
            <person name="van Kampen A.H."/>
            <person name="Bradley E.J."/>
            <person name="Baas F."/>
            <person name="Hennekam R.C."/>
            <person name="Millington D.S."/>
            <person name="Young S.P."/>
            <person name="Frazier D.M."/>
            <person name="Gucsavas-Calikoglu M."/>
            <person name="Wanders R.J."/>
        </authorList>
    </citation>
    <scope>INVOLVEMENT IN DECRD</scope>
</reference>
<reference key="11">
    <citation type="journal article" date="2014" name="J. Proteomics">
        <title>An enzyme assisted RP-RPLC approach for in-depth analysis of human liver phosphoproteome.</title>
        <authorList>
            <person name="Bian Y."/>
            <person name="Song C."/>
            <person name="Cheng K."/>
            <person name="Dong M."/>
            <person name="Wang F."/>
            <person name="Huang J."/>
            <person name="Sun D."/>
            <person name="Wang L."/>
            <person name="Ye M."/>
            <person name="Zou H."/>
        </authorList>
    </citation>
    <scope>PHOSPHORYLATION [LARGE SCALE ANALYSIS] AT THR-69</scope>
    <scope>IDENTIFICATION BY MASS SPECTROMETRY [LARGE SCALE ANALYSIS]</scope>
    <source>
        <tissue>Liver</tissue>
    </source>
</reference>
<reference key="12">
    <citation type="journal article" date="2015" name="Proteomics">
        <title>N-terminome analysis of the human mitochondrial proteome.</title>
        <authorList>
            <person name="Vaca Jacome A.S."/>
            <person name="Rabilloud T."/>
            <person name="Schaeffer-Reiss C."/>
            <person name="Rompais M."/>
            <person name="Ayoub D."/>
            <person name="Lane L."/>
            <person name="Bairoch A."/>
            <person name="Van Dorsselaer A."/>
            <person name="Carapito C."/>
        </authorList>
    </citation>
    <scope>IDENTIFICATION BY MASS SPECTROMETRY [LARGE SCALE ANALYSIS]</scope>
</reference>
<reference key="13">
    <citation type="journal article" date="2005" name="J. Biol. Chem.">
        <title>Structure and reactivity of human mitochondrial 2,4-dienoyl-CoA reductase: enzyme-ligand interactions in a distinctive short-chain reductase active site.</title>
        <authorList>
            <person name="Alphey M.S."/>
            <person name="Yu W."/>
            <person name="Byres E."/>
            <person name="Li D."/>
            <person name="Hunter W.N."/>
        </authorList>
    </citation>
    <scope>X-RAY CRYSTALLOGRAPHY (1.75 ANGSTROMS) OF 35-335 IN COMPLEX WITH NADP AND SUBSTRATE</scope>
    <scope>CATALYTIC ACTIVITY</scope>
    <scope>SUBUNIT</scope>
    <scope>BIOPHYSICOCHEMICAL PROPERTIES</scope>
    <scope>MUTAGENESIS OF ASN-148; TYR-199; SER-210 AND LYS-214</scope>
    <scope>FUNCTION</scope>
</reference>
<name>DECR_HUMAN</name>
<comment type="function">
    <text evidence="4">Auxiliary enzyme of beta-oxidation. It participates in the metabolism of unsaturated fatty enoyl-CoA esters having double bonds in both even- and odd-numbered positions in mitochondria. Catalyzes the NADP-dependent reduction of 2,4-dienoyl-CoA to yield trans-3-enoyl-CoA.</text>
</comment>
<comment type="catalytic activity">
    <reaction evidence="4">
        <text>a (2E,4E)-dienoyl-CoA + NADPH + H(+) = a 4,5-saturated-(3E)-enoyl-CoA + NADP(+)</text>
        <dbReference type="Rhea" id="RHEA:45912"/>
        <dbReference type="ChEBI" id="CHEBI:15378"/>
        <dbReference type="ChEBI" id="CHEBI:57783"/>
        <dbReference type="ChEBI" id="CHEBI:58349"/>
        <dbReference type="ChEBI" id="CHEBI:85101"/>
        <dbReference type="ChEBI" id="CHEBI:85493"/>
        <dbReference type="EC" id="1.3.1.124"/>
    </reaction>
</comment>
<comment type="catalytic activity">
    <reaction evidence="4">
        <text>a (2E,4Z)-dienoyl-CoA + NADPH + H(+) = a 4,5-saturated-(3E)-enoyl-CoA + NADP(+)</text>
        <dbReference type="Rhea" id="RHEA:61892"/>
        <dbReference type="ChEBI" id="CHEBI:15378"/>
        <dbReference type="ChEBI" id="CHEBI:57783"/>
        <dbReference type="ChEBI" id="CHEBI:58349"/>
        <dbReference type="ChEBI" id="CHEBI:85099"/>
        <dbReference type="ChEBI" id="CHEBI:85493"/>
        <dbReference type="EC" id="1.3.1.124"/>
    </reaction>
</comment>
<comment type="catalytic activity">
    <reaction evidence="4">
        <text>(2E,4E)-hexadienoyl-CoA + NADPH + H(+) = (3E)-hexenoyl-CoA + NADP(+)</text>
        <dbReference type="Rhea" id="RHEA:44912"/>
        <dbReference type="ChEBI" id="CHEBI:15378"/>
        <dbReference type="ChEBI" id="CHEBI:57783"/>
        <dbReference type="ChEBI" id="CHEBI:58349"/>
        <dbReference type="ChEBI" id="CHEBI:84788"/>
        <dbReference type="ChEBI" id="CHEBI:84790"/>
    </reaction>
</comment>
<comment type="biophysicochemical properties">
    <kinetics>
        <KM evidence="4">7.7 uM for NADPH</KM>
        <KM evidence="4">14.3 uM for trans-2,trans-4-hexadienoyl-CoA</KM>
        <Vmax evidence="4">30.3 umol/min/mg enzyme</Vmax>
    </kinetics>
</comment>
<comment type="subunit">
    <text evidence="4">Homotetramer.</text>
</comment>
<comment type="subcellular location">
    <subcellularLocation>
        <location evidence="6">Mitochondrion</location>
    </subcellularLocation>
</comment>
<comment type="alternative products">
    <event type="alternative splicing"/>
    <isoform>
        <id>Q16698-1</id>
        <name>1</name>
        <sequence type="displayed"/>
    </isoform>
    <isoform>
        <id>Q16698-2</id>
        <name>2</name>
        <sequence type="described" ref="VSP_056388"/>
    </isoform>
</comment>
<comment type="tissue specificity">
    <text evidence="6">Heart = liver = pancreas &gt; kidney &gt;&gt; skeletal muscle = lung.</text>
</comment>
<comment type="disease" evidence="5">
    <disease id="DI-04240">
        <name>2,4-dienoyl-CoA reductase deficiency</name>
        <acronym>DECRD</acronym>
        <description>A rare, autosomal recessive, inborn error of polyunsaturated fatty acids and lysine metabolism, resulting in mitochondrial dysfunction. Affected individuals have a severe encephalopathy with neurologic and metabolic abnormalities beginning in early infancy. Laboratory studies show increased C10:2 carnitine levels and hyperlysinemia.</description>
        <dbReference type="MIM" id="616034"/>
    </disease>
    <text evidence="5">The protein represented in this entry is involved in disease pathogenesis. A selective decrease in mitochondrial NADP(H) levels due to NADK2 mutations causes a deficiency of NADPH-dependent mitochondrial enzymes, such as DECR1 and AASS.</text>
</comment>
<comment type="similarity">
    <text evidence="8">Belongs to the short-chain dehydrogenases/reductases (SDR) family. 2,4-dienoyl-CoA reductase subfamily.</text>
</comment>
<feature type="transit peptide" description="Mitochondrion" evidence="9">
    <location>
        <begin position="1"/>
        <end position="34"/>
    </location>
</feature>
<feature type="chain" id="PRO_0000031965" description="2,4-dienoyl-CoA reductase [(3E)-enoyl-CoA-producing], mitochondrial">
    <location>
        <begin position="35"/>
        <end position="335"/>
    </location>
</feature>
<feature type="active site" description="Proton acceptor" evidence="3">
    <location>
        <position position="199"/>
    </location>
</feature>
<feature type="binding site" evidence="4">
    <location>
        <begin position="66"/>
        <end position="71"/>
    </location>
    <ligand>
        <name>NADP(+)</name>
        <dbReference type="ChEBI" id="CHEBI:58349"/>
    </ligand>
</feature>
<feature type="binding site" evidence="4">
    <location>
        <position position="91"/>
    </location>
    <ligand>
        <name>NADP(+)</name>
        <dbReference type="ChEBI" id="CHEBI:58349"/>
    </ligand>
</feature>
<feature type="binding site" evidence="1">
    <location>
        <position position="91"/>
    </location>
    <ligand>
        <name>substrate</name>
    </ligand>
</feature>
<feature type="binding site" evidence="4">
    <location>
        <position position="117"/>
    </location>
    <ligand>
        <name>NADP(+)</name>
        <dbReference type="ChEBI" id="CHEBI:58349"/>
    </ligand>
</feature>
<feature type="binding site" evidence="4">
    <location>
        <position position="119"/>
    </location>
    <ligand>
        <name>substrate</name>
    </ligand>
</feature>
<feature type="binding site" evidence="4">
    <location>
        <position position="149"/>
    </location>
    <ligand>
        <name>substrate</name>
    </ligand>
</feature>
<feature type="binding site" evidence="4">
    <location>
        <position position="157"/>
    </location>
    <ligand>
        <name>substrate</name>
    </ligand>
</feature>
<feature type="binding site" evidence="4">
    <location>
        <position position="214"/>
    </location>
    <ligand>
        <name>NADP(+)</name>
        <dbReference type="ChEBI" id="CHEBI:58349"/>
    </ligand>
</feature>
<feature type="binding site" evidence="4">
    <location>
        <begin position="240"/>
        <end position="243"/>
    </location>
    <ligand>
        <name>NADP(+)</name>
        <dbReference type="ChEBI" id="CHEBI:58349"/>
    </ligand>
</feature>
<feature type="binding site" evidence="1">
    <location>
        <position position="251"/>
    </location>
    <ligand>
        <name>substrate</name>
    </ligand>
</feature>
<feature type="modified residue" description="N6-acetyllysine; alternate" evidence="2">
    <location>
        <position position="42"/>
    </location>
</feature>
<feature type="modified residue" description="N6-succinyllysine; alternate" evidence="2">
    <location>
        <position position="42"/>
    </location>
</feature>
<feature type="modified residue" description="N6-acetyllysine; alternate" evidence="2">
    <location>
        <position position="49"/>
    </location>
</feature>
<feature type="modified residue" description="N6-succinyllysine; alternate" evidence="2">
    <location>
        <position position="49"/>
    </location>
</feature>
<feature type="modified residue" description="Phosphothreonine" evidence="11">
    <location>
        <position position="69"/>
    </location>
</feature>
<feature type="modified residue" description="N6-succinyllysine" evidence="2">
    <location>
        <position position="73"/>
    </location>
</feature>
<feature type="modified residue" description="N6-acetyllysine; alternate" evidence="2">
    <location>
        <position position="97"/>
    </location>
</feature>
<feature type="modified residue" description="N6-succinyllysine; alternate" evidence="2">
    <location>
        <position position="97"/>
    </location>
</feature>
<feature type="modified residue" description="N6-acetyllysine" evidence="10">
    <location>
        <position position="230"/>
    </location>
</feature>
<feature type="modified residue" description="N6-acetyllysine; alternate" evidence="2">
    <location>
        <position position="244"/>
    </location>
</feature>
<feature type="modified residue" description="N6-succinyllysine; alternate" evidence="2">
    <location>
        <position position="244"/>
    </location>
</feature>
<feature type="modified residue" description="N6-acetyllysine; alternate" evidence="2">
    <location>
        <position position="260"/>
    </location>
</feature>
<feature type="modified residue" description="N6-succinyllysine; alternate" evidence="2">
    <location>
        <position position="260"/>
    </location>
</feature>
<feature type="modified residue" description="N6-acetyllysine; alternate" evidence="2">
    <location>
        <position position="319"/>
    </location>
</feature>
<feature type="modified residue" description="N6-succinyllysine; alternate" evidence="2">
    <location>
        <position position="319"/>
    </location>
</feature>
<feature type="splice variant" id="VSP_056388" description="In isoform 2." evidence="7">
    <original>MKLPARVFFTLGSRLPCGLAPRR</original>
    <variation>MSGLGKKHLLLMGE</variation>
    <location>
        <begin position="1"/>
        <end position="23"/>
    </location>
</feature>
<feature type="sequence variant" id="VAR_012034" description="In dbSNP:rs15094.">
    <original>K</original>
    <variation>N</variation>
    <location>
        <position position="333"/>
    </location>
</feature>
<feature type="mutagenesis site" description="Reduces enzyme activity by 97%." evidence="4">
    <original>N</original>
    <variation>A</variation>
    <location>
        <position position="148"/>
    </location>
</feature>
<feature type="mutagenesis site" description="Reduces enzyme activity by 99%. Strongly reduced affinity for substrate and for NADP." evidence="4">
    <original>Y</original>
    <variation>A</variation>
    <location>
        <position position="199"/>
    </location>
</feature>
<feature type="mutagenesis site" description="Reduces enzyme activity by over 99%." evidence="4">
    <original>S</original>
    <variation>A</variation>
    <location>
        <position position="210"/>
    </location>
</feature>
<feature type="mutagenesis site" description="Reduces enzyme activity by over 99%." evidence="4">
    <original>K</original>
    <variation>A</variation>
    <location>
        <position position="214"/>
    </location>
</feature>
<feature type="sequence conflict" description="In Ref. 2; AAB09423." evidence="8" ref="2">
    <original>D</original>
    <variation>G</variation>
    <location>
        <position position="287"/>
    </location>
</feature>
<feature type="sequence conflict" description="In Ref. 2; AAB09423." evidence="8" ref="2">
    <original>I</original>
    <variation>V</variation>
    <location>
        <position position="292"/>
    </location>
</feature>
<feature type="sequence conflict" description="In Ref. 2; AAB09423." evidence="8" ref="2">
    <original>E</original>
    <variation>G</variation>
    <location>
        <position position="303"/>
    </location>
</feature>
<feature type="sequence conflict" description="In Ref. 2; AAB09423." evidence="8" ref="2">
    <original>F</original>
    <variation>G</variation>
    <location>
        <position position="311"/>
    </location>
</feature>
<feature type="helix" evidence="12">
    <location>
        <begin position="36"/>
        <end position="43"/>
    </location>
</feature>
<feature type="turn" evidence="12">
    <location>
        <begin position="54"/>
        <end position="59"/>
    </location>
</feature>
<feature type="strand" evidence="12">
    <location>
        <begin position="61"/>
        <end position="65"/>
    </location>
</feature>
<feature type="turn" evidence="12">
    <location>
        <begin position="66"/>
        <end position="68"/>
    </location>
</feature>
<feature type="helix" evidence="12">
    <location>
        <begin position="70"/>
        <end position="81"/>
    </location>
</feature>
<feature type="strand" evidence="12">
    <location>
        <begin position="85"/>
        <end position="91"/>
    </location>
</feature>
<feature type="helix" evidence="12">
    <location>
        <begin position="93"/>
        <end position="107"/>
    </location>
</feature>
<feature type="strand" evidence="12">
    <location>
        <begin position="111"/>
        <end position="115"/>
    </location>
</feature>
<feature type="helix" evidence="12">
    <location>
        <begin position="121"/>
        <end position="134"/>
    </location>
</feature>
<feature type="strand" evidence="12">
    <location>
        <begin position="139"/>
        <end position="143"/>
    </location>
</feature>
<feature type="helix" evidence="12">
    <location>
        <begin position="153"/>
        <end position="155"/>
    </location>
</feature>
<feature type="helix" evidence="12">
    <location>
        <begin position="158"/>
        <end position="185"/>
    </location>
</feature>
<feature type="strand" evidence="12">
    <location>
        <begin position="190"/>
        <end position="195"/>
    </location>
</feature>
<feature type="helix" evidence="12">
    <location>
        <begin position="199"/>
        <end position="202"/>
    </location>
</feature>
<feature type="helix" evidence="12">
    <location>
        <begin position="208"/>
        <end position="228"/>
    </location>
</feature>
<feature type="helix" evidence="12">
    <location>
        <begin position="229"/>
        <end position="231"/>
    </location>
</feature>
<feature type="strand" evidence="12">
    <location>
        <begin position="233"/>
        <end position="240"/>
    </location>
</feature>
<feature type="strand" evidence="13">
    <location>
        <begin position="254"/>
        <end position="256"/>
    </location>
</feature>
<feature type="helix" evidence="12">
    <location>
        <begin position="257"/>
        <end position="263"/>
    </location>
</feature>
<feature type="helix" evidence="12">
    <location>
        <begin position="274"/>
        <end position="284"/>
    </location>
</feature>
<feature type="helix" evidence="12">
    <location>
        <begin position="287"/>
        <end position="289"/>
    </location>
</feature>
<feature type="strand" evidence="12">
    <location>
        <begin position="296"/>
        <end position="300"/>
    </location>
</feature>
<feature type="helix" evidence="12">
    <location>
        <begin position="303"/>
        <end position="308"/>
    </location>
</feature>
<feature type="helix" evidence="12">
    <location>
        <begin position="312"/>
        <end position="316"/>
    </location>
</feature>
<feature type="helix" evidence="12">
    <location>
        <begin position="319"/>
        <end position="325"/>
    </location>
</feature>